<comment type="function">
    <text>Alpha-galactosidase that specifically removes branched alpha-1,3-linked galactose residues present in blood group B antigens. Has no activity toward linear alpha-1,3-linked galactose residues.</text>
</comment>
<comment type="catalytic activity">
    <reaction evidence="2">
        <text>Hydrolysis of terminal, non-reducing branched (1-&gt;3)-alpha-D-galactosidic residues, producing free D-galactose.</text>
        <dbReference type="EC" id="3.2.1.n1"/>
    </reaction>
</comment>
<comment type="catalytic activity">
    <reaction evidence="2">
        <text>Hydrolysis of terminal, non-reducing alpha-D-galactose residues in alpha-D-galactosides, including galactose oligosaccharides, galactomannans and galactolipids.</text>
        <dbReference type="EC" id="3.2.1.22"/>
    </reaction>
</comment>
<comment type="similarity">
    <text evidence="3">Belongs to the glycosyl hydrolase 110 family. A subfamily.</text>
</comment>
<dbReference type="EC" id="3.2.1.n1"/>
<dbReference type="EC" id="3.2.1.22"/>
<dbReference type="EMBL" id="AM109953">
    <property type="protein sequence ID" value="CAJ33349.1"/>
    <property type="molecule type" value="Genomic_DNA"/>
</dbReference>
<dbReference type="EMBL" id="BA000030">
    <property type="protein sequence ID" value="BAC74979.1"/>
    <property type="molecule type" value="Genomic_DNA"/>
</dbReference>
<dbReference type="SMR" id="Q826C5"/>
<dbReference type="CAZy" id="GH110">
    <property type="family name" value="Glycoside Hydrolase Family 110"/>
</dbReference>
<dbReference type="KEGG" id="sma:SAVERM_7268"/>
<dbReference type="eggNOG" id="COG5434">
    <property type="taxonomic scope" value="Bacteria"/>
</dbReference>
<dbReference type="HOGENOM" id="CLU_017693_0_0_11"/>
<dbReference type="OrthoDB" id="9807299at2"/>
<dbReference type="Proteomes" id="UP000000428">
    <property type="component" value="Chromosome"/>
</dbReference>
<dbReference type="GO" id="GO:0004557">
    <property type="term" value="F:alpha-galactosidase activity"/>
    <property type="evidence" value="ECO:0007669"/>
    <property type="project" value="UniProtKB-EC"/>
</dbReference>
<dbReference type="Gene3D" id="2.160.20.10">
    <property type="entry name" value="Single-stranded right-handed beta-helix, Pectin lyase-like"/>
    <property type="match status" value="2"/>
</dbReference>
<dbReference type="InterPro" id="IPR056441">
    <property type="entry name" value="Beta-barrel_GLAA-B_II"/>
</dbReference>
<dbReference type="InterPro" id="IPR006626">
    <property type="entry name" value="PbH1"/>
</dbReference>
<dbReference type="InterPro" id="IPR012334">
    <property type="entry name" value="Pectin_lyas_fold"/>
</dbReference>
<dbReference type="InterPro" id="IPR011050">
    <property type="entry name" value="Pectin_lyase_fold/virulence"/>
</dbReference>
<dbReference type="InterPro" id="IPR024535">
    <property type="entry name" value="RHGA/B-epi-like_pectate_lyase"/>
</dbReference>
<dbReference type="Pfam" id="PF23764">
    <property type="entry name" value="Beta-barrel_GLAA-B_II"/>
    <property type="match status" value="1"/>
</dbReference>
<dbReference type="Pfam" id="PF12708">
    <property type="entry name" value="Pect-lyase_RHGA_epim"/>
    <property type="match status" value="1"/>
</dbReference>
<dbReference type="SMART" id="SM00710">
    <property type="entry name" value="PbH1"/>
    <property type="match status" value="5"/>
</dbReference>
<dbReference type="SUPFAM" id="SSF51126">
    <property type="entry name" value="Pectin lyase-like"/>
    <property type="match status" value="1"/>
</dbReference>
<keyword id="KW-0326">Glycosidase</keyword>
<keyword id="KW-0378">Hydrolase</keyword>
<keyword id="KW-1185">Reference proteome</keyword>
<keyword id="KW-0677">Repeat</keyword>
<keyword id="KW-0732">Signal</keyword>
<organism>
    <name type="scientific">Streptomyces avermitilis (strain ATCC 31267 / DSM 46492 / JCM 5070 / NBRC 14893 / NCIMB 12804 / NRRL 8165 / MA-4680)</name>
    <dbReference type="NCBI Taxonomy" id="227882"/>
    <lineage>
        <taxon>Bacteria</taxon>
        <taxon>Bacillati</taxon>
        <taxon>Actinomycetota</taxon>
        <taxon>Actinomycetes</taxon>
        <taxon>Kitasatosporales</taxon>
        <taxon>Streptomycetaceae</taxon>
        <taxon>Streptomyces</taxon>
    </lineage>
</organism>
<protein>
    <recommendedName>
        <fullName>Alpha-1,3-galactosidase A</fullName>
        <ecNumber>3.2.1.n1</ecNumber>
    </recommendedName>
    <alternativeName>
        <fullName>Exo-alpha-galactosidase A</fullName>
        <ecNumber>3.2.1.22</ecNumber>
    </alternativeName>
    <alternativeName>
        <fullName>SaGal110A</fullName>
    </alternativeName>
</protein>
<name>GLAA_STRAW</name>
<reference key="1">
    <citation type="journal article" date="2007" name="Nat. Biotechnol.">
        <title>Bacterial glycosidases for the production of universal red blood cells.</title>
        <authorList>
            <person name="Liu Q.P."/>
            <person name="Sulzenbacher G."/>
            <person name="Yuan H."/>
            <person name="Bennett E.P."/>
            <person name="Pietz G."/>
            <person name="Saunders K."/>
            <person name="Spence J."/>
            <person name="Nudelman E."/>
            <person name="Levery S.B."/>
            <person name="White T."/>
            <person name="Neveu J.M."/>
            <person name="Lane W.S."/>
            <person name="Bourne Y."/>
            <person name="Olsson M.L."/>
            <person name="Henrissat B."/>
            <person name="Clausen H."/>
        </authorList>
    </citation>
    <scope>NUCLEOTIDE SEQUENCE [GENOMIC DNA]</scope>
    <source>
        <strain>ATCC 31267 / DSM 46492 / JCM 5070 / NBRC 14893 / NCIMB 12804 / NRRL 8165 / MA-4680</strain>
    </source>
</reference>
<reference key="2">
    <citation type="journal article" date="2001" name="Proc. Natl. Acad. Sci. U.S.A.">
        <title>Genome sequence of an industrial microorganism Streptomyces avermitilis: deducing the ability of producing secondary metabolites.</title>
        <authorList>
            <person name="Omura S."/>
            <person name="Ikeda H."/>
            <person name="Ishikawa J."/>
            <person name="Hanamoto A."/>
            <person name="Takahashi C."/>
            <person name="Shinose M."/>
            <person name="Takahashi Y."/>
            <person name="Horikawa H."/>
            <person name="Nakazawa H."/>
            <person name="Osonoe T."/>
            <person name="Kikuchi H."/>
            <person name="Shiba T."/>
            <person name="Sakaki Y."/>
            <person name="Hattori M."/>
        </authorList>
    </citation>
    <scope>NUCLEOTIDE SEQUENCE [LARGE SCALE GENOMIC DNA]</scope>
    <source>
        <strain>ATCC 31267 / DSM 46492 / JCM 5070 / NBRC 14893 / NCIMB 12804 / NRRL 8165 / MA-4680</strain>
    </source>
</reference>
<reference key="3">
    <citation type="journal article" date="2003" name="Nat. Biotechnol.">
        <title>Complete genome sequence and comparative analysis of the industrial microorganism Streptomyces avermitilis.</title>
        <authorList>
            <person name="Ikeda H."/>
            <person name="Ishikawa J."/>
            <person name="Hanamoto A."/>
            <person name="Shinose M."/>
            <person name="Kikuchi H."/>
            <person name="Shiba T."/>
            <person name="Sakaki Y."/>
            <person name="Hattori M."/>
            <person name="Omura S."/>
        </authorList>
    </citation>
    <scope>NUCLEOTIDE SEQUENCE [LARGE SCALE GENOMIC DNA]</scope>
    <source>
        <strain>ATCC 31267 / DSM 46492 / JCM 5070 / NBRC 14893 / NCIMB 12804 / NRRL 8165 / MA-4680</strain>
    </source>
</reference>
<reference key="4">
    <citation type="journal article" date="2008" name="J. Biol. Chem.">
        <title>Identification of a GH110 subfamily of alpha1,3-galactosidases: novel enzymes for removal of the alpha3Gal xenotransplantation antigen.</title>
        <authorList>
            <person name="Liu Q.P."/>
            <person name="Yuan H."/>
            <person name="Bennett E.P."/>
            <person name="Levery S.B."/>
            <person name="Nudelman E."/>
            <person name="Spence J."/>
            <person name="Pietz G."/>
            <person name="Saunders K."/>
            <person name="White T."/>
            <person name="Olsson M.L."/>
            <person name="Henrissat B."/>
            <person name="Sulzenbacher G."/>
            <person name="Clausen H."/>
        </authorList>
    </citation>
    <scope>ENZYME ACTIVITY</scope>
</reference>
<gene>
    <name type="primary">glaA</name>
    <name type="ordered locus">SAV_7268</name>
</gene>
<sequence length="625" mass="67184">MAHGCSGGAMSRFVFLGVALALLGGATSPAAAAPRVTPVVVDVDDYGADPTGRTDSTPAVAAALRHAKSVDRPVRIVFSKGTYQLYPERAETRELYMSNTVGADQRYRDKKIGLLVEDMHDVTVDGGGAKLVHHGLQTAFASIRSTDVTFQNFSFDYAAPEVIDATVATTGVTDGHAYRVLKIPAGSPYRVNGTHITWLGETSPATGQPYWSGVDGLQYTQIHDPEAQRTWRGDNPLFNDVAAVTDLGGRRIRIDYTTAARPADAGLVYQMRLIERTEPGAFIWESKNVTMRSMNAYYLQSFGVVGQFSENISIDKVNFAPDPRSGRSTASFADFVQMSGVKGKVSITRSLFDGPHDDPINIHGTYLEVVGKPGPSTLTLAYKHPQTAGFPQFAPGDEVEFATKRTMTPLADAHAQVTAVDGPSGMDHTKPLTTMTVTFDRPVPAGVETGGTVVENITATPSVVISGNVFRNVPTRGILVTTRKPVLITGNRFDGMSMASIYVSADAYQWYESGPVADLTIRGNSFTRPSGPVIFVEPTNQVIDPATPVHHNISVEHNSFDIGDVTVVNAKSVGGFAFTGNTVRRLDGADHPPYTSPLFVFHGSSGIRIARNHYDKGLNTSVVTD</sequence>
<proteinExistence type="inferred from homology"/>
<evidence type="ECO:0000255" key="1"/>
<evidence type="ECO:0000269" key="2">
    <source>
    </source>
</evidence>
<evidence type="ECO:0000305" key="3"/>
<feature type="signal peptide" evidence="1">
    <location>
        <begin position="1"/>
        <end position="32"/>
    </location>
</feature>
<feature type="chain" id="PRO_0000348474" description="Alpha-1,3-galactosidase A">
    <location>
        <begin position="33"/>
        <end position="625"/>
    </location>
</feature>
<feature type="repeat" description="PbH1 1">
    <location>
        <begin position="342"/>
        <end position="364"/>
    </location>
</feature>
<feature type="repeat" description="PbH1 2">
    <location>
        <begin position="460"/>
        <end position="482"/>
    </location>
</feature>
<feature type="repeat" description="PbH1 3">
    <location>
        <begin position="483"/>
        <end position="505"/>
    </location>
</feature>
<feature type="repeat" description="PbH1 4">
    <location>
        <begin position="516"/>
        <end position="537"/>
    </location>
</feature>
<feature type="repeat" description="PbH1 5">
    <location>
        <begin position="573"/>
        <end position="611"/>
    </location>
</feature>
<accession>Q826C5</accession>
<accession>A4Q8G4</accession>